<evidence type="ECO:0000255" key="1">
    <source>
        <dbReference type="HAMAP-Rule" id="MF_00328"/>
    </source>
</evidence>
<keyword id="KW-0067">ATP-binding</keyword>
<keyword id="KW-0963">Cytoplasm</keyword>
<keyword id="KW-0418">Kinase</keyword>
<keyword id="KW-0547">Nucleotide-binding</keyword>
<keyword id="KW-1185">Reference proteome</keyword>
<keyword id="KW-0808">Transferase</keyword>
<dbReference type="EC" id="2.7.4.8" evidence="1"/>
<dbReference type="EMBL" id="CP000143">
    <property type="protein sequence ID" value="ABA79079.1"/>
    <property type="molecule type" value="Genomic_DNA"/>
</dbReference>
<dbReference type="RefSeq" id="WP_011337846.1">
    <property type="nucleotide sequence ID" value="NC_007493.2"/>
</dbReference>
<dbReference type="RefSeq" id="YP_352980.1">
    <property type="nucleotide sequence ID" value="NC_007493.2"/>
</dbReference>
<dbReference type="SMR" id="Q3J2A5"/>
<dbReference type="STRING" id="272943.RSP_2919"/>
<dbReference type="EnsemblBacteria" id="ABA79079">
    <property type="protein sequence ID" value="ABA79079"/>
    <property type="gene ID" value="RSP_2919"/>
</dbReference>
<dbReference type="GeneID" id="3720658"/>
<dbReference type="KEGG" id="rsp:RSP_2919"/>
<dbReference type="PATRIC" id="fig|272943.9.peg.1855"/>
<dbReference type="eggNOG" id="COG0194">
    <property type="taxonomic scope" value="Bacteria"/>
</dbReference>
<dbReference type="OrthoDB" id="9808150at2"/>
<dbReference type="PhylomeDB" id="Q3J2A5"/>
<dbReference type="Proteomes" id="UP000002703">
    <property type="component" value="Chromosome 1"/>
</dbReference>
<dbReference type="GO" id="GO:0005829">
    <property type="term" value="C:cytosol"/>
    <property type="evidence" value="ECO:0007669"/>
    <property type="project" value="TreeGrafter"/>
</dbReference>
<dbReference type="GO" id="GO:0005524">
    <property type="term" value="F:ATP binding"/>
    <property type="evidence" value="ECO:0007669"/>
    <property type="project" value="UniProtKB-UniRule"/>
</dbReference>
<dbReference type="GO" id="GO:0004385">
    <property type="term" value="F:guanylate kinase activity"/>
    <property type="evidence" value="ECO:0007669"/>
    <property type="project" value="UniProtKB-UniRule"/>
</dbReference>
<dbReference type="CDD" id="cd00071">
    <property type="entry name" value="GMPK"/>
    <property type="match status" value="1"/>
</dbReference>
<dbReference type="FunFam" id="3.30.63.10:FF:000002">
    <property type="entry name" value="Guanylate kinase 1"/>
    <property type="match status" value="1"/>
</dbReference>
<dbReference type="Gene3D" id="3.30.63.10">
    <property type="entry name" value="Guanylate Kinase phosphate binding domain"/>
    <property type="match status" value="1"/>
</dbReference>
<dbReference type="Gene3D" id="3.40.50.300">
    <property type="entry name" value="P-loop containing nucleotide triphosphate hydrolases"/>
    <property type="match status" value="1"/>
</dbReference>
<dbReference type="HAMAP" id="MF_00328">
    <property type="entry name" value="Guanylate_kinase"/>
    <property type="match status" value="1"/>
</dbReference>
<dbReference type="InterPro" id="IPR008145">
    <property type="entry name" value="GK/Ca_channel_bsu"/>
</dbReference>
<dbReference type="InterPro" id="IPR008144">
    <property type="entry name" value="Guanylate_kin-like_dom"/>
</dbReference>
<dbReference type="InterPro" id="IPR017665">
    <property type="entry name" value="Guanylate_kinase"/>
</dbReference>
<dbReference type="InterPro" id="IPR020590">
    <property type="entry name" value="Guanylate_kinase_CS"/>
</dbReference>
<dbReference type="InterPro" id="IPR027417">
    <property type="entry name" value="P-loop_NTPase"/>
</dbReference>
<dbReference type="NCBIfam" id="TIGR03263">
    <property type="entry name" value="guanyl_kin"/>
    <property type="match status" value="1"/>
</dbReference>
<dbReference type="PANTHER" id="PTHR23117:SF13">
    <property type="entry name" value="GUANYLATE KINASE"/>
    <property type="match status" value="1"/>
</dbReference>
<dbReference type="PANTHER" id="PTHR23117">
    <property type="entry name" value="GUANYLATE KINASE-RELATED"/>
    <property type="match status" value="1"/>
</dbReference>
<dbReference type="Pfam" id="PF00625">
    <property type="entry name" value="Guanylate_kin"/>
    <property type="match status" value="1"/>
</dbReference>
<dbReference type="SMART" id="SM00072">
    <property type="entry name" value="GuKc"/>
    <property type="match status" value="1"/>
</dbReference>
<dbReference type="SUPFAM" id="SSF52540">
    <property type="entry name" value="P-loop containing nucleoside triphosphate hydrolases"/>
    <property type="match status" value="1"/>
</dbReference>
<dbReference type="PROSITE" id="PS00856">
    <property type="entry name" value="GUANYLATE_KINASE_1"/>
    <property type="match status" value="1"/>
</dbReference>
<dbReference type="PROSITE" id="PS50052">
    <property type="entry name" value="GUANYLATE_KINASE_2"/>
    <property type="match status" value="1"/>
</dbReference>
<sequence length="211" mass="23948">MARRGLLLILSSPSGAGKSTLSKRLTAWDPSIRFSVSATTRAPRPGEVDGRDYYFRTRDEFIAAVEAGEMLEHAEVFGNFYGSPKAPVEKALEQGHDTLFDIDWQGGQQIRNSSLGRDVVSIFVLPPSIGELDRRLRSRAQDSEEVIATRMARSKDEISHWAEYDYVLVNRDLDLAEEQLKMILSAERLRRDRQPDLMDFVRGLNGEFETR</sequence>
<reference key="1">
    <citation type="submission" date="2005-09" db="EMBL/GenBank/DDBJ databases">
        <title>Complete sequence of chromosome 1 of Rhodobacter sphaeroides 2.4.1.</title>
        <authorList>
            <person name="Copeland A."/>
            <person name="Lucas S."/>
            <person name="Lapidus A."/>
            <person name="Barry K."/>
            <person name="Detter J.C."/>
            <person name="Glavina T."/>
            <person name="Hammon N."/>
            <person name="Israni S."/>
            <person name="Pitluck S."/>
            <person name="Richardson P."/>
            <person name="Mackenzie C."/>
            <person name="Choudhary M."/>
            <person name="Larimer F."/>
            <person name="Hauser L.J."/>
            <person name="Land M."/>
            <person name="Donohue T.J."/>
            <person name="Kaplan S."/>
        </authorList>
    </citation>
    <scope>NUCLEOTIDE SEQUENCE [LARGE SCALE GENOMIC DNA]</scope>
    <source>
        <strain>ATCC 17023 / DSM 158 / JCM 6121 / CCUG 31486 / LMG 2827 / NBRC 12203 / NCIMB 8253 / ATH 2.4.1.</strain>
    </source>
</reference>
<name>KGUA_CERS4</name>
<proteinExistence type="inferred from homology"/>
<comment type="function">
    <text evidence="1">Essential for recycling GMP and indirectly, cGMP.</text>
</comment>
<comment type="catalytic activity">
    <reaction evidence="1">
        <text>GMP + ATP = GDP + ADP</text>
        <dbReference type="Rhea" id="RHEA:20780"/>
        <dbReference type="ChEBI" id="CHEBI:30616"/>
        <dbReference type="ChEBI" id="CHEBI:58115"/>
        <dbReference type="ChEBI" id="CHEBI:58189"/>
        <dbReference type="ChEBI" id="CHEBI:456216"/>
        <dbReference type="EC" id="2.7.4.8"/>
    </reaction>
</comment>
<comment type="subcellular location">
    <subcellularLocation>
        <location evidence="1">Cytoplasm</location>
    </subcellularLocation>
</comment>
<comment type="similarity">
    <text evidence="1">Belongs to the guanylate kinase family.</text>
</comment>
<organism>
    <name type="scientific">Cereibacter sphaeroides (strain ATCC 17023 / DSM 158 / JCM 6121 / CCUG 31486 / LMG 2827 / NBRC 12203 / NCIMB 8253 / ATH 2.4.1.)</name>
    <name type="common">Rhodobacter sphaeroides</name>
    <dbReference type="NCBI Taxonomy" id="272943"/>
    <lineage>
        <taxon>Bacteria</taxon>
        <taxon>Pseudomonadati</taxon>
        <taxon>Pseudomonadota</taxon>
        <taxon>Alphaproteobacteria</taxon>
        <taxon>Rhodobacterales</taxon>
        <taxon>Paracoccaceae</taxon>
        <taxon>Cereibacter</taxon>
    </lineage>
</organism>
<gene>
    <name evidence="1" type="primary">gmk</name>
    <name type="ordered locus">RHOS4_15110</name>
    <name type="ORF">RSP_2919</name>
</gene>
<protein>
    <recommendedName>
        <fullName evidence="1">Guanylate kinase</fullName>
        <ecNumber evidence="1">2.7.4.8</ecNumber>
    </recommendedName>
    <alternativeName>
        <fullName evidence="1">GMP kinase</fullName>
    </alternativeName>
</protein>
<accession>Q3J2A5</accession>
<feature type="chain" id="PRO_0000266381" description="Guanylate kinase">
    <location>
        <begin position="1"/>
        <end position="211"/>
    </location>
</feature>
<feature type="domain" description="Guanylate kinase-like" evidence="1">
    <location>
        <begin position="5"/>
        <end position="185"/>
    </location>
</feature>
<feature type="binding site" evidence="1">
    <location>
        <begin position="12"/>
        <end position="19"/>
    </location>
    <ligand>
        <name>ATP</name>
        <dbReference type="ChEBI" id="CHEBI:30616"/>
    </ligand>
</feature>